<accession>A7MJD4</accession>
<keyword id="KW-0067">ATP-binding</keyword>
<keyword id="KW-0342">GTP-binding</keyword>
<keyword id="KW-0547">Nucleotide-binding</keyword>
<keyword id="KW-1185">Reference proteome</keyword>
<keyword id="KW-0694">RNA-binding</keyword>
<comment type="function">
    <text evidence="1">Modulates the synthesis of GlmS, by affecting the processing and stability of the regulatory small RNA GlmZ. When glucosamine-6-phosphate (GlcN6P) concentrations are high in the cell, RapZ binds GlmZ and targets it to cleavage by RNase E. Consequently, GlmZ is inactivated and unable to activate GlmS synthesis. Under low GlcN6P concentrations, RapZ is sequestered and inactivated by an other regulatory small RNA, GlmY, preventing GlmZ degradation and leading to synthesis of GlmS.</text>
</comment>
<comment type="subunit">
    <text evidence="1">Homotrimer.</text>
</comment>
<comment type="similarity">
    <text evidence="1">Belongs to the RapZ-like family. RapZ subfamily.</text>
</comment>
<comment type="sequence caution" evidence="2">
    <conflict type="erroneous initiation">
        <sequence resource="EMBL-CDS" id="ABU78809"/>
    </conflict>
</comment>
<organism>
    <name type="scientific">Cronobacter sakazakii (strain ATCC BAA-894)</name>
    <name type="common">Enterobacter sakazakii</name>
    <dbReference type="NCBI Taxonomy" id="290339"/>
    <lineage>
        <taxon>Bacteria</taxon>
        <taxon>Pseudomonadati</taxon>
        <taxon>Pseudomonadota</taxon>
        <taxon>Gammaproteobacteria</taxon>
        <taxon>Enterobacterales</taxon>
        <taxon>Enterobacteriaceae</taxon>
        <taxon>Cronobacter</taxon>
    </lineage>
</organism>
<name>RAPZ_CROS8</name>
<evidence type="ECO:0000255" key="1">
    <source>
        <dbReference type="HAMAP-Rule" id="MF_00636"/>
    </source>
</evidence>
<evidence type="ECO:0000305" key="2"/>
<gene>
    <name evidence="1" type="primary">rapZ</name>
    <name type="ordered locus">ESA_03598</name>
</gene>
<proteinExistence type="inferred from homology"/>
<protein>
    <recommendedName>
        <fullName evidence="1">RNase adapter protein RapZ</fullName>
    </recommendedName>
</protein>
<reference key="1">
    <citation type="journal article" date="2010" name="PLoS ONE">
        <title>Genome sequence of Cronobacter sakazakii BAA-894 and comparative genomic hybridization analysis with other Cronobacter species.</title>
        <authorList>
            <person name="Kucerova E."/>
            <person name="Clifton S.W."/>
            <person name="Xia X.Q."/>
            <person name="Long F."/>
            <person name="Porwollik S."/>
            <person name="Fulton L."/>
            <person name="Fronick C."/>
            <person name="Minx P."/>
            <person name="Kyung K."/>
            <person name="Warren W."/>
            <person name="Fulton R."/>
            <person name="Feng D."/>
            <person name="Wollam A."/>
            <person name="Shah N."/>
            <person name="Bhonagiri V."/>
            <person name="Nash W.E."/>
            <person name="Hallsworth-Pepin K."/>
            <person name="Wilson R.K."/>
            <person name="McClelland M."/>
            <person name="Forsythe S.J."/>
        </authorList>
    </citation>
    <scope>NUCLEOTIDE SEQUENCE [LARGE SCALE GENOMIC DNA]</scope>
    <source>
        <strain>ATCC BAA-894</strain>
    </source>
</reference>
<sequence length="284" mass="32566">MVLMIVSGRSGSGKSVALRALEDMGFYCVDNLPVVLLPELARTLSERQISAAVSIDVRNMPESPEVFEQAMNNLPDAFSPQLLFLDADRNTLIRRYSDTRRLHPLSSKNLSLESAIDEENDLLEPLRSRADLIVDTSEMSVHELAEMLRTRLLGKRERELTMVFESFGFKHGIPIDADYVFDVRFLPNPHWDPKLRPMTGLDKPVAAFLDRHTEVHNFIYQTRSYLELWLPMLETNNRSYLTVAIGCTGGKHRSVYIAEQLADYFRSRGKNVQSRHRTLEKRKS</sequence>
<dbReference type="EMBL" id="CP000783">
    <property type="protein sequence ID" value="ABU78809.1"/>
    <property type="status" value="ALT_INIT"/>
    <property type="molecule type" value="Genomic_DNA"/>
</dbReference>
<dbReference type="RefSeq" id="WP_004385096.1">
    <property type="nucleotide sequence ID" value="NC_009778.1"/>
</dbReference>
<dbReference type="SMR" id="A7MJD4"/>
<dbReference type="GeneID" id="92808014"/>
<dbReference type="KEGG" id="esa:ESA_03598"/>
<dbReference type="HOGENOM" id="CLU_059558_1_1_6"/>
<dbReference type="Proteomes" id="UP000000260">
    <property type="component" value="Chromosome"/>
</dbReference>
<dbReference type="GO" id="GO:0005524">
    <property type="term" value="F:ATP binding"/>
    <property type="evidence" value="ECO:0007669"/>
    <property type="project" value="UniProtKB-UniRule"/>
</dbReference>
<dbReference type="GO" id="GO:0005525">
    <property type="term" value="F:GTP binding"/>
    <property type="evidence" value="ECO:0007669"/>
    <property type="project" value="UniProtKB-UniRule"/>
</dbReference>
<dbReference type="GO" id="GO:0003723">
    <property type="term" value="F:RNA binding"/>
    <property type="evidence" value="ECO:0007669"/>
    <property type="project" value="UniProtKB-KW"/>
</dbReference>
<dbReference type="Gene3D" id="3.40.50.300">
    <property type="entry name" value="P-loop containing nucleotide triphosphate hydrolases"/>
    <property type="match status" value="1"/>
</dbReference>
<dbReference type="HAMAP" id="MF_00636">
    <property type="entry name" value="RapZ_like"/>
    <property type="match status" value="1"/>
</dbReference>
<dbReference type="InterPro" id="IPR027417">
    <property type="entry name" value="P-loop_NTPase"/>
</dbReference>
<dbReference type="InterPro" id="IPR005337">
    <property type="entry name" value="RapZ-like"/>
</dbReference>
<dbReference type="InterPro" id="IPR053930">
    <property type="entry name" value="RapZ-like_N"/>
</dbReference>
<dbReference type="InterPro" id="IPR053931">
    <property type="entry name" value="RapZ_C"/>
</dbReference>
<dbReference type="NCBIfam" id="NF003828">
    <property type="entry name" value="PRK05416.1"/>
    <property type="match status" value="1"/>
</dbReference>
<dbReference type="PANTHER" id="PTHR30448">
    <property type="entry name" value="RNASE ADAPTER PROTEIN RAPZ"/>
    <property type="match status" value="1"/>
</dbReference>
<dbReference type="PANTHER" id="PTHR30448:SF0">
    <property type="entry name" value="RNASE ADAPTER PROTEIN RAPZ"/>
    <property type="match status" value="1"/>
</dbReference>
<dbReference type="Pfam" id="PF22740">
    <property type="entry name" value="PapZ_C"/>
    <property type="match status" value="1"/>
</dbReference>
<dbReference type="Pfam" id="PF03668">
    <property type="entry name" value="RapZ-like_N"/>
    <property type="match status" value="1"/>
</dbReference>
<dbReference type="PIRSF" id="PIRSF005052">
    <property type="entry name" value="P-loopkin"/>
    <property type="match status" value="1"/>
</dbReference>
<dbReference type="SUPFAM" id="SSF52540">
    <property type="entry name" value="P-loop containing nucleoside triphosphate hydrolases"/>
    <property type="match status" value="1"/>
</dbReference>
<feature type="chain" id="PRO_0000383245" description="RNase adapter protein RapZ">
    <location>
        <begin position="1"/>
        <end position="284"/>
    </location>
</feature>
<feature type="region of interest" description="RNA-binding" evidence="1">
    <location>
        <begin position="266"/>
        <end position="284"/>
    </location>
</feature>
<feature type="binding site" evidence="1">
    <location>
        <begin position="8"/>
        <end position="15"/>
    </location>
    <ligand>
        <name>ATP</name>
        <dbReference type="ChEBI" id="CHEBI:30616"/>
    </ligand>
</feature>
<feature type="binding site" evidence="1">
    <location>
        <begin position="56"/>
        <end position="59"/>
    </location>
    <ligand>
        <name>GTP</name>
        <dbReference type="ChEBI" id="CHEBI:37565"/>
    </ligand>
</feature>